<accession>Q4L7W0</accession>
<keyword id="KW-0067">ATP-binding</keyword>
<keyword id="KW-0963">Cytoplasm</keyword>
<keyword id="KW-0347">Helicase</keyword>
<keyword id="KW-0378">Hydrolase</keyword>
<keyword id="KW-0547">Nucleotide-binding</keyword>
<keyword id="KW-0694">RNA-binding</keyword>
<keyword id="KW-0346">Stress response</keyword>
<gene>
    <name evidence="1" type="primary">cshA</name>
    <name type="ordered locus">SH0956</name>
</gene>
<reference key="1">
    <citation type="journal article" date="2005" name="J. Bacteriol.">
        <title>Whole-genome sequencing of Staphylococcus haemolyticus uncovers the extreme plasticity of its genome and the evolution of human-colonizing staphylococcal species.</title>
        <authorList>
            <person name="Takeuchi F."/>
            <person name="Watanabe S."/>
            <person name="Baba T."/>
            <person name="Yuzawa H."/>
            <person name="Ito T."/>
            <person name="Morimoto Y."/>
            <person name="Kuroda M."/>
            <person name="Cui L."/>
            <person name="Takahashi M."/>
            <person name="Ankai A."/>
            <person name="Baba S."/>
            <person name="Fukui S."/>
            <person name="Lee J.C."/>
            <person name="Hiramatsu K."/>
        </authorList>
    </citation>
    <scope>NUCLEOTIDE SEQUENCE [LARGE SCALE GENOMIC DNA]</scope>
    <source>
        <strain>JCSC1435</strain>
    </source>
</reference>
<feature type="chain" id="PRO_0000284829" description="DEAD-box ATP-dependent RNA helicase CshA">
    <location>
        <begin position="1"/>
        <end position="503"/>
    </location>
</feature>
<feature type="domain" description="Helicase ATP-binding" evidence="1">
    <location>
        <begin position="33"/>
        <end position="203"/>
    </location>
</feature>
<feature type="domain" description="Helicase C-terminal" evidence="1">
    <location>
        <begin position="214"/>
        <end position="375"/>
    </location>
</feature>
<feature type="region of interest" description="Disordered" evidence="2">
    <location>
        <begin position="436"/>
        <end position="503"/>
    </location>
</feature>
<feature type="short sequence motif" description="Q motif">
    <location>
        <begin position="2"/>
        <end position="30"/>
    </location>
</feature>
<feature type="short sequence motif" description="DEAD box">
    <location>
        <begin position="150"/>
        <end position="153"/>
    </location>
</feature>
<feature type="compositionally biased region" description="Basic residues" evidence="2">
    <location>
        <begin position="466"/>
        <end position="480"/>
    </location>
</feature>
<feature type="compositionally biased region" description="Basic and acidic residues" evidence="2">
    <location>
        <begin position="481"/>
        <end position="490"/>
    </location>
</feature>
<feature type="binding site" evidence="1">
    <location>
        <begin position="46"/>
        <end position="53"/>
    </location>
    <ligand>
        <name>ATP</name>
        <dbReference type="ChEBI" id="CHEBI:30616"/>
    </ligand>
</feature>
<comment type="function">
    <text evidence="1">DEAD-box RNA helicase possibly involved in RNA degradation. Unwinds dsRNA in both 5'- and 3'-directions, has RNA-dependent ATPase activity.</text>
</comment>
<comment type="catalytic activity">
    <reaction evidence="1">
        <text>ATP + H2O = ADP + phosphate + H(+)</text>
        <dbReference type="Rhea" id="RHEA:13065"/>
        <dbReference type="ChEBI" id="CHEBI:15377"/>
        <dbReference type="ChEBI" id="CHEBI:15378"/>
        <dbReference type="ChEBI" id="CHEBI:30616"/>
        <dbReference type="ChEBI" id="CHEBI:43474"/>
        <dbReference type="ChEBI" id="CHEBI:456216"/>
        <dbReference type="EC" id="3.6.4.13"/>
    </reaction>
</comment>
<comment type="subunit">
    <text evidence="1">Oligomerizes, may be a member of the RNA degradosome.</text>
</comment>
<comment type="subcellular location">
    <subcellularLocation>
        <location evidence="1">Cytoplasm</location>
    </subcellularLocation>
</comment>
<comment type="similarity">
    <text evidence="1">Belongs to the DEAD box helicase family. CshA subfamily.</text>
</comment>
<proteinExistence type="inferred from homology"/>
<sequence length="503" mass="57029">MQNFKELGISDKTVETLEAMGFKEPTPIQKDSIPYTLEGKDILGQAQTGTGKTGAFGIPLIEKVVGQSGVQALILAPTRELAMQVAEQLREFSRGQNVQVVTVFGGMPIDRQIKALKRGPQIVVGTPGRVIDHLNRRTLKTNGIHTLILDEADEMMNMGFIDDMRFIMDKIPAEQRQTMLFSATMPKAIQTLVQQFMKSPQIVKTMNNEMSDPQIDEYYTIVKELEKFDTFTNFLDVHQPELAIVFGRTKRRVDELTSALLSKGYKAEGLHGDITQAKRLEVLKKFKNDQIDILVATDVAARGLDISGVSHVYNFDIPQDTESYTHRIGRTGRAGKEGIAVTFVNPIEMDYIRQIEDSNGRRMNALRPPHRKEVLKAREDDIKDKVKNWMSRESEARLKRISSELLEEYDSTELVASLLQELVEANDEVEVQLTFEKPLARKNRQGKGNGSRRGGKRNNKFDNKNKRSKGNFNKKKGKKTDRRERQDKGRSTMKGRTFADLQK</sequence>
<dbReference type="EC" id="3.6.4.13" evidence="1"/>
<dbReference type="EMBL" id="AP006716">
    <property type="protein sequence ID" value="BAE04265.1"/>
    <property type="molecule type" value="Genomic_DNA"/>
</dbReference>
<dbReference type="RefSeq" id="WP_011275265.1">
    <property type="nucleotide sequence ID" value="NC_007168.1"/>
</dbReference>
<dbReference type="SMR" id="Q4L7W0"/>
<dbReference type="KEGG" id="sha:SH0956"/>
<dbReference type="eggNOG" id="COG0513">
    <property type="taxonomic scope" value="Bacteria"/>
</dbReference>
<dbReference type="HOGENOM" id="CLU_003041_21_1_9"/>
<dbReference type="OrthoDB" id="9805696at2"/>
<dbReference type="Proteomes" id="UP000000543">
    <property type="component" value="Chromosome"/>
</dbReference>
<dbReference type="GO" id="GO:0005829">
    <property type="term" value="C:cytosol"/>
    <property type="evidence" value="ECO:0007669"/>
    <property type="project" value="TreeGrafter"/>
</dbReference>
<dbReference type="GO" id="GO:0005840">
    <property type="term" value="C:ribosome"/>
    <property type="evidence" value="ECO:0007669"/>
    <property type="project" value="TreeGrafter"/>
</dbReference>
<dbReference type="GO" id="GO:0005524">
    <property type="term" value="F:ATP binding"/>
    <property type="evidence" value="ECO:0007669"/>
    <property type="project" value="UniProtKB-UniRule"/>
</dbReference>
<dbReference type="GO" id="GO:0016887">
    <property type="term" value="F:ATP hydrolysis activity"/>
    <property type="evidence" value="ECO:0007669"/>
    <property type="project" value="RHEA"/>
</dbReference>
<dbReference type="GO" id="GO:0003724">
    <property type="term" value="F:RNA helicase activity"/>
    <property type="evidence" value="ECO:0007669"/>
    <property type="project" value="UniProtKB-UniRule"/>
</dbReference>
<dbReference type="GO" id="GO:0033592">
    <property type="term" value="F:RNA strand annealing activity"/>
    <property type="evidence" value="ECO:0007669"/>
    <property type="project" value="TreeGrafter"/>
</dbReference>
<dbReference type="GO" id="GO:0009409">
    <property type="term" value="P:response to cold"/>
    <property type="evidence" value="ECO:0007669"/>
    <property type="project" value="TreeGrafter"/>
</dbReference>
<dbReference type="GO" id="GO:0006401">
    <property type="term" value="P:RNA catabolic process"/>
    <property type="evidence" value="ECO:0007669"/>
    <property type="project" value="UniProtKB-UniRule"/>
</dbReference>
<dbReference type="CDD" id="cd00268">
    <property type="entry name" value="DEADc"/>
    <property type="match status" value="1"/>
</dbReference>
<dbReference type="CDD" id="cd18787">
    <property type="entry name" value="SF2_C_DEAD"/>
    <property type="match status" value="1"/>
</dbReference>
<dbReference type="FunFam" id="3.40.50.300:FF:000108">
    <property type="entry name" value="ATP-dependent RNA helicase RhlE"/>
    <property type="match status" value="1"/>
</dbReference>
<dbReference type="Gene3D" id="3.40.50.300">
    <property type="entry name" value="P-loop containing nucleotide triphosphate hydrolases"/>
    <property type="match status" value="2"/>
</dbReference>
<dbReference type="HAMAP" id="MF_01493">
    <property type="entry name" value="DEAD_helicase_CshA"/>
    <property type="match status" value="1"/>
</dbReference>
<dbReference type="InterPro" id="IPR011545">
    <property type="entry name" value="DEAD/DEAH_box_helicase_dom"/>
</dbReference>
<dbReference type="InterPro" id="IPR050547">
    <property type="entry name" value="DEAD_box_RNA_helicases"/>
</dbReference>
<dbReference type="InterPro" id="IPR030880">
    <property type="entry name" value="DEAD_helicase_CshA"/>
</dbReference>
<dbReference type="InterPro" id="IPR014001">
    <property type="entry name" value="Helicase_ATP-bd"/>
</dbReference>
<dbReference type="InterPro" id="IPR001650">
    <property type="entry name" value="Helicase_C-like"/>
</dbReference>
<dbReference type="InterPro" id="IPR027417">
    <property type="entry name" value="P-loop_NTPase"/>
</dbReference>
<dbReference type="InterPro" id="IPR000629">
    <property type="entry name" value="RNA-helicase_DEAD-box_CS"/>
</dbReference>
<dbReference type="InterPro" id="IPR014014">
    <property type="entry name" value="RNA_helicase_DEAD_Q_motif"/>
</dbReference>
<dbReference type="PANTHER" id="PTHR47963">
    <property type="entry name" value="DEAD-BOX ATP-DEPENDENT RNA HELICASE 47, MITOCHONDRIAL"/>
    <property type="match status" value="1"/>
</dbReference>
<dbReference type="PANTHER" id="PTHR47963:SF5">
    <property type="entry name" value="DEAD-BOX ATP-DEPENDENT RNA HELICASE CSHA"/>
    <property type="match status" value="1"/>
</dbReference>
<dbReference type="Pfam" id="PF00270">
    <property type="entry name" value="DEAD"/>
    <property type="match status" value="1"/>
</dbReference>
<dbReference type="Pfam" id="PF00271">
    <property type="entry name" value="Helicase_C"/>
    <property type="match status" value="1"/>
</dbReference>
<dbReference type="SMART" id="SM00487">
    <property type="entry name" value="DEXDc"/>
    <property type="match status" value="1"/>
</dbReference>
<dbReference type="SMART" id="SM00490">
    <property type="entry name" value="HELICc"/>
    <property type="match status" value="1"/>
</dbReference>
<dbReference type="SUPFAM" id="SSF52540">
    <property type="entry name" value="P-loop containing nucleoside triphosphate hydrolases"/>
    <property type="match status" value="1"/>
</dbReference>
<dbReference type="PROSITE" id="PS00039">
    <property type="entry name" value="DEAD_ATP_HELICASE"/>
    <property type="match status" value="1"/>
</dbReference>
<dbReference type="PROSITE" id="PS51192">
    <property type="entry name" value="HELICASE_ATP_BIND_1"/>
    <property type="match status" value="1"/>
</dbReference>
<dbReference type="PROSITE" id="PS51194">
    <property type="entry name" value="HELICASE_CTER"/>
    <property type="match status" value="1"/>
</dbReference>
<dbReference type="PROSITE" id="PS51195">
    <property type="entry name" value="Q_MOTIF"/>
    <property type="match status" value="1"/>
</dbReference>
<protein>
    <recommendedName>
        <fullName evidence="1">DEAD-box ATP-dependent RNA helicase CshA</fullName>
        <ecNumber evidence="1">3.6.4.13</ecNumber>
    </recommendedName>
</protein>
<organism>
    <name type="scientific">Staphylococcus haemolyticus (strain JCSC1435)</name>
    <dbReference type="NCBI Taxonomy" id="279808"/>
    <lineage>
        <taxon>Bacteria</taxon>
        <taxon>Bacillati</taxon>
        <taxon>Bacillota</taxon>
        <taxon>Bacilli</taxon>
        <taxon>Bacillales</taxon>
        <taxon>Staphylococcaceae</taxon>
        <taxon>Staphylococcus</taxon>
    </lineage>
</organism>
<name>CSHA_STAHJ</name>
<evidence type="ECO:0000255" key="1">
    <source>
        <dbReference type="HAMAP-Rule" id="MF_01493"/>
    </source>
</evidence>
<evidence type="ECO:0000256" key="2">
    <source>
        <dbReference type="SAM" id="MobiDB-lite"/>
    </source>
</evidence>